<name>YIDD_TREDE</name>
<reference key="1">
    <citation type="journal article" date="2004" name="Proc. Natl. Acad. Sci. U.S.A.">
        <title>Comparison of the genome of the oral pathogen Treponema denticola with other spirochete genomes.</title>
        <authorList>
            <person name="Seshadri R."/>
            <person name="Myers G.S.A."/>
            <person name="Tettelin H."/>
            <person name="Eisen J.A."/>
            <person name="Heidelberg J.F."/>
            <person name="Dodson R.J."/>
            <person name="Davidsen T.M."/>
            <person name="DeBoy R.T."/>
            <person name="Fouts D.E."/>
            <person name="Haft D.H."/>
            <person name="Selengut J."/>
            <person name="Ren Q."/>
            <person name="Brinkac L.M."/>
            <person name="Madupu R."/>
            <person name="Kolonay J.F."/>
            <person name="Durkin S.A."/>
            <person name="Daugherty S.C."/>
            <person name="Shetty J."/>
            <person name="Shvartsbeyn A."/>
            <person name="Gebregeorgis E."/>
            <person name="Geer K."/>
            <person name="Tsegaye G."/>
            <person name="Malek J.A."/>
            <person name="Ayodeji B."/>
            <person name="Shatsman S."/>
            <person name="McLeod M.P."/>
            <person name="Smajs D."/>
            <person name="Howell J.K."/>
            <person name="Pal S."/>
            <person name="Amin A."/>
            <person name="Vashisth P."/>
            <person name="McNeill T.Z."/>
            <person name="Xiang Q."/>
            <person name="Sodergren E."/>
            <person name="Baca E."/>
            <person name="Weinstock G.M."/>
            <person name="Norris S.J."/>
            <person name="Fraser C.M."/>
            <person name="Paulsen I.T."/>
        </authorList>
    </citation>
    <scope>NUCLEOTIDE SEQUENCE [LARGE SCALE GENOMIC DNA]</scope>
    <source>
        <strain>ATCC 35405 / DSM 14222 / CIP 103919 / JCM 8153 / KCTC 15104</strain>
    </source>
</reference>
<sequence length="73" mass="8202">MRKLLVSFLCACIIFYQKAISPHFPPSCRYEPTCSQYAIESIKKYGPFKGAGMALLRILRCNPLCKGGYDPVP</sequence>
<accession>P61474</accession>
<dbReference type="EMBL" id="AE017226">
    <property type="protein sequence ID" value="AAS12916.1"/>
    <property type="molecule type" value="Genomic_DNA"/>
</dbReference>
<dbReference type="RefSeq" id="NP_972997.1">
    <property type="nucleotide sequence ID" value="NC_002967.9"/>
</dbReference>
<dbReference type="STRING" id="243275.TDE_2398"/>
<dbReference type="PaxDb" id="243275-TDE_2398"/>
<dbReference type="GeneID" id="2740700"/>
<dbReference type="KEGG" id="tde:TDE_2398"/>
<dbReference type="PATRIC" id="fig|243275.7.peg.2264"/>
<dbReference type="eggNOG" id="COG0759">
    <property type="taxonomic scope" value="Bacteria"/>
</dbReference>
<dbReference type="HOGENOM" id="CLU_144811_6_0_12"/>
<dbReference type="OrthoDB" id="9801753at2"/>
<dbReference type="Proteomes" id="UP000008212">
    <property type="component" value="Chromosome"/>
</dbReference>
<dbReference type="GO" id="GO:0005886">
    <property type="term" value="C:plasma membrane"/>
    <property type="evidence" value="ECO:0007669"/>
    <property type="project" value="UniProtKB-SubCell"/>
</dbReference>
<dbReference type="HAMAP" id="MF_00386">
    <property type="entry name" value="UPF0161_YidD"/>
    <property type="match status" value="1"/>
</dbReference>
<dbReference type="InterPro" id="IPR002696">
    <property type="entry name" value="Membr_insert_effic_factor_YidD"/>
</dbReference>
<dbReference type="NCBIfam" id="TIGR00278">
    <property type="entry name" value="membrane protein insertion efficiency factor YidD"/>
    <property type="match status" value="1"/>
</dbReference>
<dbReference type="PANTHER" id="PTHR33383">
    <property type="entry name" value="MEMBRANE PROTEIN INSERTION EFFICIENCY FACTOR-RELATED"/>
    <property type="match status" value="1"/>
</dbReference>
<dbReference type="PANTHER" id="PTHR33383:SF1">
    <property type="entry name" value="MEMBRANE PROTEIN INSERTION EFFICIENCY FACTOR-RELATED"/>
    <property type="match status" value="1"/>
</dbReference>
<dbReference type="Pfam" id="PF01809">
    <property type="entry name" value="YidD"/>
    <property type="match status" value="1"/>
</dbReference>
<dbReference type="SMART" id="SM01234">
    <property type="entry name" value="Haemolytic"/>
    <property type="match status" value="1"/>
</dbReference>
<comment type="function">
    <text evidence="1">Could be involved in insertion of integral membrane proteins into the membrane.</text>
</comment>
<comment type="subcellular location">
    <subcellularLocation>
        <location evidence="1">Cell inner membrane</location>
        <topology evidence="1">Peripheral membrane protein</topology>
        <orientation evidence="1">Cytoplasmic side</orientation>
    </subcellularLocation>
</comment>
<comment type="similarity">
    <text evidence="1">Belongs to the UPF0161 family.</text>
</comment>
<evidence type="ECO:0000255" key="1">
    <source>
        <dbReference type="HAMAP-Rule" id="MF_00386"/>
    </source>
</evidence>
<organism>
    <name type="scientific">Treponema denticola (strain ATCC 35405 / DSM 14222 / CIP 103919 / JCM 8153 / KCTC 15104)</name>
    <dbReference type="NCBI Taxonomy" id="243275"/>
    <lineage>
        <taxon>Bacteria</taxon>
        <taxon>Pseudomonadati</taxon>
        <taxon>Spirochaetota</taxon>
        <taxon>Spirochaetia</taxon>
        <taxon>Spirochaetales</taxon>
        <taxon>Treponemataceae</taxon>
        <taxon>Treponema</taxon>
    </lineage>
</organism>
<proteinExistence type="inferred from homology"/>
<gene>
    <name type="ordered locus">TDE_2398</name>
</gene>
<protein>
    <recommendedName>
        <fullName evidence="1">Putative membrane protein insertion efficiency factor</fullName>
    </recommendedName>
</protein>
<feature type="chain" id="PRO_0000171892" description="Putative membrane protein insertion efficiency factor">
    <location>
        <begin position="1"/>
        <end position="73"/>
    </location>
</feature>
<keyword id="KW-0997">Cell inner membrane</keyword>
<keyword id="KW-1003">Cell membrane</keyword>
<keyword id="KW-0472">Membrane</keyword>
<keyword id="KW-1185">Reference proteome</keyword>